<proteinExistence type="evidence at protein level"/>
<name>FAR8_SARBU</name>
<comment type="subcellular location">
    <subcellularLocation>
        <location evidence="4">Secreted</location>
    </subcellularLocation>
</comment>
<comment type="mass spectrometry"/>
<comment type="similarity">
    <text evidence="1">Belongs to the FARP (FMRFamide related peptide) family.</text>
</comment>
<sequence>AGGADNFMRF</sequence>
<accession>P85480</accession>
<dbReference type="GO" id="GO:0005576">
    <property type="term" value="C:extracellular region"/>
    <property type="evidence" value="ECO:0007669"/>
    <property type="project" value="UniProtKB-SubCell"/>
</dbReference>
<dbReference type="GO" id="GO:0007218">
    <property type="term" value="P:neuropeptide signaling pathway"/>
    <property type="evidence" value="ECO:0007669"/>
    <property type="project" value="UniProtKB-KW"/>
</dbReference>
<organism>
    <name type="scientific">Sarcophaga bullata</name>
    <name type="common">Grey flesh fly</name>
    <name type="synonym">Neobellieria bullata</name>
    <dbReference type="NCBI Taxonomy" id="7385"/>
    <lineage>
        <taxon>Eukaryota</taxon>
        <taxon>Metazoa</taxon>
        <taxon>Ecdysozoa</taxon>
        <taxon>Arthropoda</taxon>
        <taxon>Hexapoda</taxon>
        <taxon>Insecta</taxon>
        <taxon>Pterygota</taxon>
        <taxon>Neoptera</taxon>
        <taxon>Endopterygota</taxon>
        <taxon>Diptera</taxon>
        <taxon>Brachycera</taxon>
        <taxon>Muscomorpha</taxon>
        <taxon>Oestroidea</taxon>
        <taxon>Sarcophagidae</taxon>
        <taxon>Sarcophaga</taxon>
        <taxon>Neobellieria</taxon>
    </lineage>
</organism>
<keyword id="KW-0027">Amidation</keyword>
<keyword id="KW-0903">Direct protein sequencing</keyword>
<keyword id="KW-0527">Neuropeptide</keyword>
<keyword id="KW-0964">Secreted</keyword>
<evidence type="ECO:0000255" key="1"/>
<evidence type="ECO:0000269" key="2">
    <source>
    </source>
</evidence>
<evidence type="ECO:0000303" key="3">
    <source>
    </source>
</evidence>
<evidence type="ECO:0000305" key="4"/>
<protein>
    <recommendedName>
        <fullName>FMRFamide-8</fullName>
    </recommendedName>
    <alternativeName>
        <fullName evidence="3">SabFMRFamide-8</fullName>
    </alternativeName>
</protein>
<reference evidence="4" key="1">
    <citation type="journal article" date="2009" name="Gen. Comp. Endocrinol.">
        <title>Extended FMRFamides in dipteran insects: conservative expression in the neuroendocrine system is accompanied by rapid sequence evolution.</title>
        <authorList>
            <person name="Rahman M.M."/>
            <person name="Fromm B."/>
            <person name="Neupert S."/>
            <person name="Kreusch S."/>
            <person name="Predel R."/>
        </authorList>
    </citation>
    <scope>PROTEIN SEQUENCE</scope>
    <scope>MASS SPECTROMETRY</scope>
    <scope>AMIDATION AT PHE-10</scope>
    <source>
        <tissue evidence="2">Thoracic ganglionic sheath</tissue>
    </source>
</reference>
<feature type="peptide" id="PRO_0000371767" description="FMRFamide-8">
    <location>
        <begin position="1"/>
        <end position="10"/>
    </location>
</feature>
<feature type="modified residue" description="Phenylalanine amide" evidence="2">
    <location>
        <position position="10"/>
    </location>
</feature>